<accession>P06568</accession>
<dbReference type="EMBL" id="X04963">
    <property type="protein sequence ID" value="CAA28634.1"/>
    <property type="molecule type" value="Genomic_DNA"/>
</dbReference>
<dbReference type="EMBL" id="Z75208">
    <property type="protein sequence ID" value="CAA99606.1"/>
    <property type="molecule type" value="Genomic_DNA"/>
</dbReference>
<dbReference type="EMBL" id="AF008220">
    <property type="protein sequence ID" value="AAC00360.1"/>
    <property type="molecule type" value="Genomic_DNA"/>
</dbReference>
<dbReference type="EMBL" id="AL009126">
    <property type="protein sequence ID" value="CAB14857.1"/>
    <property type="molecule type" value="Genomic_DNA"/>
</dbReference>
<dbReference type="PIR" id="C24720">
    <property type="entry name" value="C24720"/>
</dbReference>
<dbReference type="RefSeq" id="NP_390775.1">
    <property type="nucleotide sequence ID" value="NC_000964.3"/>
</dbReference>
<dbReference type="RefSeq" id="WP_003229468.1">
    <property type="nucleotide sequence ID" value="NZ_OZ025638.1"/>
</dbReference>
<dbReference type="FunCoup" id="P06568">
    <property type="interactions" value="56"/>
</dbReference>
<dbReference type="STRING" id="224308.BSU28970"/>
<dbReference type="PaxDb" id="224308-BSU28970"/>
<dbReference type="DNASU" id="937403"/>
<dbReference type="EnsemblBacteria" id="CAB14857">
    <property type="protein sequence ID" value="CAB14857"/>
    <property type="gene ID" value="BSU_28970"/>
</dbReference>
<dbReference type="GeneID" id="937403"/>
<dbReference type="KEGG" id="bsu:BSU28970"/>
<dbReference type="PATRIC" id="fig|224308.179.peg.3146"/>
<dbReference type="eggNOG" id="COG0398">
    <property type="taxonomic scope" value="Bacteria"/>
</dbReference>
<dbReference type="InParanoid" id="P06568"/>
<dbReference type="OrthoDB" id="9812980at2"/>
<dbReference type="PhylomeDB" id="P06568"/>
<dbReference type="BioCyc" id="BSUB:BSU28970-MONOMER"/>
<dbReference type="Proteomes" id="UP000001570">
    <property type="component" value="Chromosome"/>
</dbReference>
<dbReference type="GO" id="GO:0005886">
    <property type="term" value="C:plasma membrane"/>
    <property type="evidence" value="ECO:0000318"/>
    <property type="project" value="GO_Central"/>
</dbReference>
<dbReference type="InterPro" id="IPR015414">
    <property type="entry name" value="TMEM64"/>
</dbReference>
<dbReference type="InterPro" id="IPR032816">
    <property type="entry name" value="VTT_dom"/>
</dbReference>
<dbReference type="PANTHER" id="PTHR12677">
    <property type="entry name" value="GOLGI APPARATUS MEMBRANE PROTEIN TVP38-RELATED"/>
    <property type="match status" value="1"/>
</dbReference>
<dbReference type="PANTHER" id="PTHR12677:SF59">
    <property type="entry name" value="GOLGI APPARATUS MEMBRANE PROTEIN TVP38-RELATED"/>
    <property type="match status" value="1"/>
</dbReference>
<dbReference type="Pfam" id="PF09335">
    <property type="entry name" value="VTT_dom"/>
    <property type="match status" value="1"/>
</dbReference>
<evidence type="ECO:0000255" key="1"/>
<evidence type="ECO:0000305" key="2"/>
<proteinExistence type="inferred from homology"/>
<sequence>MKRKTAVKWLAVLAGAGLLYWGNKTYLNVSPKEIRVWVLSFGVFAPLMFIGISIVRPLVLFPVSVISIAGGLAFGPLLGTLYTLFGSMCASAVSFFAAGLFSAKKNGHYERLEAIQKQMEDNGFFYIFLLRILPINFDFVSYAAGLSNVKALPYFAATAVGIIPGTIALNVLGASFLAGNLPAFFMVLALYIVFISLPFIFRKKMQNLFQESN</sequence>
<comment type="subcellular location">
    <subcellularLocation>
        <location evidence="2">Cell membrane</location>
        <topology evidence="2">Multi-pass membrane protein</topology>
    </subcellularLocation>
</comment>
<comment type="similarity">
    <text evidence="2">Belongs to the TVP38/TMEM64 family.</text>
</comment>
<organism>
    <name type="scientific">Bacillus subtilis (strain 168)</name>
    <dbReference type="NCBI Taxonomy" id="224308"/>
    <lineage>
        <taxon>Bacteria</taxon>
        <taxon>Bacillati</taxon>
        <taxon>Bacillota</taxon>
        <taxon>Bacilli</taxon>
        <taxon>Bacillales</taxon>
        <taxon>Bacillaceae</taxon>
        <taxon>Bacillus</taxon>
    </lineage>
</organism>
<keyword id="KW-1003">Cell membrane</keyword>
<keyword id="KW-0472">Membrane</keyword>
<keyword id="KW-1185">Reference proteome</keyword>
<keyword id="KW-0812">Transmembrane</keyword>
<keyword id="KW-1133">Transmembrane helix</keyword>
<name>YTXB_BACSU</name>
<gene>
    <name type="primary">ytxB</name>
    <name type="ordered locus">BSU28970</name>
</gene>
<feature type="chain" id="PRO_0000198635" description="TVP38/TMEM64 family membrane protein YtxB">
    <location>
        <begin position="1"/>
        <end position="213"/>
    </location>
</feature>
<feature type="transmembrane region" description="Helical" evidence="1">
    <location>
        <begin position="9"/>
        <end position="29"/>
    </location>
</feature>
<feature type="transmembrane region" description="Helical" evidence="1">
    <location>
        <begin position="34"/>
        <end position="54"/>
    </location>
</feature>
<feature type="transmembrane region" description="Helical" evidence="1">
    <location>
        <begin position="58"/>
        <end position="78"/>
    </location>
</feature>
<feature type="transmembrane region" description="Helical" evidence="1">
    <location>
        <begin position="81"/>
        <end position="101"/>
    </location>
</feature>
<feature type="transmembrane region" description="Helical" evidence="1">
    <location>
        <begin position="159"/>
        <end position="179"/>
    </location>
</feature>
<feature type="transmembrane region" description="Helical" evidence="1">
    <location>
        <begin position="181"/>
        <end position="201"/>
    </location>
</feature>
<reference key="1">
    <citation type="journal article" date="1986" name="Nucleic Acids Res.">
        <title>Nucleotide sequence and organization of dnaB gene and neighbouring genes on the Bacillus subtilis chromosome.</title>
        <authorList>
            <person name="Ogasawara N."/>
            <person name="Moriya S."/>
            <person name="Mazza P.G."/>
            <person name="Yoshikawa H."/>
        </authorList>
    </citation>
    <scope>NUCLEOTIDE SEQUENCE [GENOMIC DNA]</scope>
</reference>
<reference key="2">
    <citation type="journal article" date="1996" name="Microbiology">
        <title>The dnaB-pheA (256 degrees-240 degrees) region of the Bacillus subtilis chromosome containing genes responsible for stress responses, the utilization of plant cell walls and primary metabolism.</title>
        <authorList>
            <person name="Wipat A."/>
            <person name="Carter N."/>
            <person name="Brignell C.S."/>
            <person name="Guy J.B."/>
            <person name="Piper K."/>
            <person name="Sanders J."/>
            <person name="Emmerson P.T."/>
            <person name="Harwood C.R."/>
        </authorList>
    </citation>
    <scope>NUCLEOTIDE SEQUENCE [GENOMIC DNA]</scope>
    <source>
        <strain>168</strain>
    </source>
</reference>
<reference key="3">
    <citation type="journal article" date="1997" name="Microbiology">
        <title>Sequencing and functional annotation of the Bacillus subtilis genes in the 200 kb rrnB-dnaB region.</title>
        <authorList>
            <person name="Lapidus A."/>
            <person name="Galleron N."/>
            <person name="Sorokin A."/>
            <person name="Ehrlich S.D."/>
        </authorList>
    </citation>
    <scope>NUCLEOTIDE SEQUENCE [GENOMIC DNA]</scope>
    <source>
        <strain>168</strain>
    </source>
</reference>
<reference key="4">
    <citation type="journal article" date="1997" name="Nature">
        <title>The complete genome sequence of the Gram-positive bacterium Bacillus subtilis.</title>
        <authorList>
            <person name="Kunst F."/>
            <person name="Ogasawara N."/>
            <person name="Moszer I."/>
            <person name="Albertini A.M."/>
            <person name="Alloni G."/>
            <person name="Azevedo V."/>
            <person name="Bertero M.G."/>
            <person name="Bessieres P."/>
            <person name="Bolotin A."/>
            <person name="Borchert S."/>
            <person name="Borriss R."/>
            <person name="Boursier L."/>
            <person name="Brans A."/>
            <person name="Braun M."/>
            <person name="Brignell S.C."/>
            <person name="Bron S."/>
            <person name="Brouillet S."/>
            <person name="Bruschi C.V."/>
            <person name="Caldwell B."/>
            <person name="Capuano V."/>
            <person name="Carter N.M."/>
            <person name="Choi S.-K."/>
            <person name="Codani J.-J."/>
            <person name="Connerton I.F."/>
            <person name="Cummings N.J."/>
            <person name="Daniel R.A."/>
            <person name="Denizot F."/>
            <person name="Devine K.M."/>
            <person name="Duesterhoeft A."/>
            <person name="Ehrlich S.D."/>
            <person name="Emmerson P.T."/>
            <person name="Entian K.-D."/>
            <person name="Errington J."/>
            <person name="Fabret C."/>
            <person name="Ferrari E."/>
            <person name="Foulger D."/>
            <person name="Fritz C."/>
            <person name="Fujita M."/>
            <person name="Fujita Y."/>
            <person name="Fuma S."/>
            <person name="Galizzi A."/>
            <person name="Galleron N."/>
            <person name="Ghim S.-Y."/>
            <person name="Glaser P."/>
            <person name="Goffeau A."/>
            <person name="Golightly E.J."/>
            <person name="Grandi G."/>
            <person name="Guiseppi G."/>
            <person name="Guy B.J."/>
            <person name="Haga K."/>
            <person name="Haiech J."/>
            <person name="Harwood C.R."/>
            <person name="Henaut A."/>
            <person name="Hilbert H."/>
            <person name="Holsappel S."/>
            <person name="Hosono S."/>
            <person name="Hullo M.-F."/>
            <person name="Itaya M."/>
            <person name="Jones L.-M."/>
            <person name="Joris B."/>
            <person name="Karamata D."/>
            <person name="Kasahara Y."/>
            <person name="Klaerr-Blanchard M."/>
            <person name="Klein C."/>
            <person name="Kobayashi Y."/>
            <person name="Koetter P."/>
            <person name="Koningstein G."/>
            <person name="Krogh S."/>
            <person name="Kumano M."/>
            <person name="Kurita K."/>
            <person name="Lapidus A."/>
            <person name="Lardinois S."/>
            <person name="Lauber J."/>
            <person name="Lazarevic V."/>
            <person name="Lee S.-M."/>
            <person name="Levine A."/>
            <person name="Liu H."/>
            <person name="Masuda S."/>
            <person name="Mauel C."/>
            <person name="Medigue C."/>
            <person name="Medina N."/>
            <person name="Mellado R.P."/>
            <person name="Mizuno M."/>
            <person name="Moestl D."/>
            <person name="Nakai S."/>
            <person name="Noback M."/>
            <person name="Noone D."/>
            <person name="O'Reilly M."/>
            <person name="Ogawa K."/>
            <person name="Ogiwara A."/>
            <person name="Oudega B."/>
            <person name="Park S.-H."/>
            <person name="Parro V."/>
            <person name="Pohl T.M."/>
            <person name="Portetelle D."/>
            <person name="Porwollik S."/>
            <person name="Prescott A.M."/>
            <person name="Presecan E."/>
            <person name="Pujic P."/>
            <person name="Purnelle B."/>
            <person name="Rapoport G."/>
            <person name="Rey M."/>
            <person name="Reynolds S."/>
            <person name="Rieger M."/>
            <person name="Rivolta C."/>
            <person name="Rocha E."/>
            <person name="Roche B."/>
            <person name="Rose M."/>
            <person name="Sadaie Y."/>
            <person name="Sato T."/>
            <person name="Scanlan E."/>
            <person name="Schleich S."/>
            <person name="Schroeter R."/>
            <person name="Scoffone F."/>
            <person name="Sekiguchi J."/>
            <person name="Sekowska A."/>
            <person name="Seror S.J."/>
            <person name="Serror P."/>
            <person name="Shin B.-S."/>
            <person name="Soldo B."/>
            <person name="Sorokin A."/>
            <person name="Tacconi E."/>
            <person name="Takagi T."/>
            <person name="Takahashi H."/>
            <person name="Takemaru K."/>
            <person name="Takeuchi M."/>
            <person name="Tamakoshi A."/>
            <person name="Tanaka T."/>
            <person name="Terpstra P."/>
            <person name="Tognoni A."/>
            <person name="Tosato V."/>
            <person name="Uchiyama S."/>
            <person name="Vandenbol M."/>
            <person name="Vannier F."/>
            <person name="Vassarotti A."/>
            <person name="Viari A."/>
            <person name="Wambutt R."/>
            <person name="Wedler E."/>
            <person name="Wedler H."/>
            <person name="Weitzenegger T."/>
            <person name="Winters P."/>
            <person name="Wipat A."/>
            <person name="Yamamoto H."/>
            <person name="Yamane K."/>
            <person name="Yasumoto K."/>
            <person name="Yata K."/>
            <person name="Yoshida K."/>
            <person name="Yoshikawa H.-F."/>
            <person name="Zumstein E."/>
            <person name="Yoshikawa H."/>
            <person name="Danchin A."/>
        </authorList>
    </citation>
    <scope>NUCLEOTIDE SEQUENCE [LARGE SCALE GENOMIC DNA]</scope>
    <source>
        <strain>168</strain>
    </source>
</reference>
<protein>
    <recommendedName>
        <fullName>TVP38/TMEM64 family membrane protein YtxB</fullName>
    </recommendedName>
    <alternativeName>
        <fullName>ORF-213</fullName>
    </alternativeName>
</protein>